<proteinExistence type="evidence at protein level"/>
<keyword id="KW-0002">3D-structure</keyword>
<keyword id="KW-1185">Reference proteome</keyword>
<organism>
    <name type="scientific">Thermotoga maritima (strain ATCC 43589 / DSM 3109 / JCM 10099 / NBRC 100826 / MSB8)</name>
    <dbReference type="NCBI Taxonomy" id="243274"/>
    <lineage>
        <taxon>Bacteria</taxon>
        <taxon>Thermotogati</taxon>
        <taxon>Thermotogota</taxon>
        <taxon>Thermotogae</taxon>
        <taxon>Thermotogales</taxon>
        <taxon>Thermotogaceae</taxon>
        <taxon>Thermotoga</taxon>
    </lineage>
</organism>
<dbReference type="EMBL" id="AE000512">
    <property type="protein sequence ID" value="AAD36481.1"/>
    <property type="molecule type" value="Genomic_DNA"/>
</dbReference>
<dbReference type="PIR" id="C72258">
    <property type="entry name" value="C72258"/>
</dbReference>
<dbReference type="RefSeq" id="NP_229211.1">
    <property type="nucleotide sequence ID" value="NC_000853.1"/>
</dbReference>
<dbReference type="RefSeq" id="WP_004081643.1">
    <property type="nucleotide sequence ID" value="NZ_CP011107.1"/>
</dbReference>
<dbReference type="PDB" id="2AAM">
    <property type="method" value="X-ray"/>
    <property type="resolution" value="2.20 A"/>
    <property type="chains" value="A/B/C/D/E/F=27-323"/>
</dbReference>
<dbReference type="PDBsum" id="2AAM"/>
<dbReference type="SMR" id="Q9X1D0"/>
<dbReference type="STRING" id="243274.TM_1410"/>
<dbReference type="PaxDb" id="243274-THEMA_07265"/>
<dbReference type="EnsemblBacteria" id="AAD36481">
    <property type="protein sequence ID" value="AAD36481"/>
    <property type="gene ID" value="TM_1410"/>
</dbReference>
<dbReference type="KEGG" id="tma:TM1410"/>
<dbReference type="KEGG" id="tmi:THEMA_07265"/>
<dbReference type="KEGG" id="tmm:Tmari_1417"/>
<dbReference type="KEGG" id="tmw:THMA_1439"/>
<dbReference type="eggNOG" id="COG2342">
    <property type="taxonomic scope" value="Bacteria"/>
</dbReference>
<dbReference type="InParanoid" id="Q9X1D0"/>
<dbReference type="OrthoDB" id="30037at2"/>
<dbReference type="EvolutionaryTrace" id="Q9X1D0"/>
<dbReference type="Proteomes" id="UP000008183">
    <property type="component" value="Chromosome"/>
</dbReference>
<dbReference type="Gene3D" id="3.20.20.70">
    <property type="entry name" value="Aldolase class I"/>
    <property type="match status" value="1"/>
</dbReference>
<dbReference type="InterPro" id="IPR013785">
    <property type="entry name" value="Aldolase_TIM"/>
</dbReference>
<dbReference type="InterPro" id="IPR004352">
    <property type="entry name" value="GH114_TIM-barrel"/>
</dbReference>
<dbReference type="InterPro" id="IPR017853">
    <property type="entry name" value="Glycoside_hydrolase_SF"/>
</dbReference>
<dbReference type="InterPro" id="IPR016062">
    <property type="entry name" value="TM1410-rel"/>
</dbReference>
<dbReference type="InterPro" id="IPR016063">
    <property type="entry name" value="TM1410_Glycdase"/>
</dbReference>
<dbReference type="NCBIfam" id="TIGR01370">
    <property type="entry name" value="MJ1477/TM1410 family putative glycoside hydrolase"/>
    <property type="match status" value="1"/>
</dbReference>
<dbReference type="PANTHER" id="PTHR35882:SF1">
    <property type="match status" value="1"/>
</dbReference>
<dbReference type="PANTHER" id="PTHR35882">
    <property type="entry name" value="PELA"/>
    <property type="match status" value="1"/>
</dbReference>
<dbReference type="Pfam" id="PF03537">
    <property type="entry name" value="Glyco_hydro_114"/>
    <property type="match status" value="1"/>
</dbReference>
<dbReference type="PRINTS" id="PR01545">
    <property type="entry name" value="THEMAYE10DUF"/>
</dbReference>
<dbReference type="SUPFAM" id="SSF51445">
    <property type="entry name" value="(Trans)glycosidases"/>
    <property type="match status" value="1"/>
</dbReference>
<name>Y1410_THEMA</name>
<feature type="chain" id="PRO_0000107361" description="Uncharacterized protein TM_1410">
    <location>
        <begin position="1"/>
        <end position="323"/>
    </location>
</feature>
<feature type="strand" evidence="1">
    <location>
        <begin position="38"/>
        <end position="40"/>
    </location>
</feature>
<feature type="helix" evidence="1">
    <location>
        <begin position="46"/>
        <end position="50"/>
    </location>
</feature>
<feature type="strand" evidence="1">
    <location>
        <begin position="55"/>
        <end position="59"/>
    </location>
</feature>
<feature type="strand" evidence="1">
    <location>
        <begin position="61"/>
        <end position="66"/>
    </location>
</feature>
<feature type="helix" evidence="1">
    <location>
        <begin position="67"/>
        <end position="69"/>
    </location>
</feature>
<feature type="helix" evidence="1">
    <location>
        <begin position="73"/>
        <end position="81"/>
    </location>
</feature>
<feature type="strand" evidence="1">
    <location>
        <begin position="85"/>
        <end position="96"/>
    </location>
</feature>
<feature type="helix" evidence="1">
    <location>
        <begin position="105"/>
        <end position="108"/>
    </location>
</feature>
<feature type="strand" evidence="1">
    <location>
        <begin position="114"/>
        <end position="118"/>
    </location>
</feature>
<feature type="strand" evidence="1">
    <location>
        <begin position="121"/>
        <end position="127"/>
    </location>
</feature>
<feature type="helix" evidence="1">
    <location>
        <begin position="132"/>
        <end position="147"/>
    </location>
</feature>
<feature type="strand" evidence="1">
    <location>
        <begin position="151"/>
        <end position="156"/>
    </location>
</feature>
<feature type="helix" evidence="1">
    <location>
        <begin position="160"/>
        <end position="167"/>
    </location>
</feature>
<feature type="helix" evidence="1">
    <location>
        <begin position="172"/>
        <end position="193"/>
    </location>
</feature>
<feature type="strand" evidence="1">
    <location>
        <begin position="198"/>
        <end position="203"/>
    </location>
</feature>
<feature type="helix" evidence="1">
    <location>
        <begin position="205"/>
        <end position="210"/>
    </location>
</feature>
<feature type="helix" evidence="1">
    <location>
        <begin position="214"/>
        <end position="218"/>
    </location>
</feature>
<feature type="strand" evidence="1">
    <location>
        <begin position="220"/>
        <end position="230"/>
    </location>
</feature>
<feature type="helix" evidence="1">
    <location>
        <begin position="237"/>
        <end position="252"/>
    </location>
</feature>
<feature type="strand" evidence="1">
    <location>
        <begin position="256"/>
        <end position="264"/>
    </location>
</feature>
<feature type="helix" evidence="1">
    <location>
        <begin position="270"/>
        <end position="285"/>
    </location>
</feature>
<feature type="strand" evidence="1">
    <location>
        <begin position="288"/>
        <end position="294"/>
    </location>
</feature>
<feature type="turn" evidence="1">
    <location>
        <begin position="306"/>
        <end position="308"/>
    </location>
</feature>
<reference key="1">
    <citation type="journal article" date="1999" name="Nature">
        <title>Evidence for lateral gene transfer between Archaea and Bacteria from genome sequence of Thermotoga maritima.</title>
        <authorList>
            <person name="Nelson K.E."/>
            <person name="Clayton R.A."/>
            <person name="Gill S.R."/>
            <person name="Gwinn M.L."/>
            <person name="Dodson R.J."/>
            <person name="Haft D.H."/>
            <person name="Hickey E.K."/>
            <person name="Peterson J.D."/>
            <person name="Nelson W.C."/>
            <person name="Ketchum K.A."/>
            <person name="McDonald L.A."/>
            <person name="Utterback T.R."/>
            <person name="Malek J.A."/>
            <person name="Linher K.D."/>
            <person name="Garrett M.M."/>
            <person name="Stewart A.M."/>
            <person name="Cotton M.D."/>
            <person name="Pratt M.S."/>
            <person name="Phillips C.A."/>
            <person name="Richardson D.L."/>
            <person name="Heidelberg J.F."/>
            <person name="Sutton G.G."/>
            <person name="Fleischmann R.D."/>
            <person name="Eisen J.A."/>
            <person name="White O."/>
            <person name="Salzberg S.L."/>
            <person name="Smith H.O."/>
            <person name="Venter J.C."/>
            <person name="Fraser C.M."/>
        </authorList>
    </citation>
    <scope>NUCLEOTIDE SEQUENCE [LARGE SCALE GENOMIC DNA]</scope>
    <source>
        <strain>ATCC 43589 / DSM 3109 / JCM 10099 / NBRC 100826 / MSB8</strain>
    </source>
</reference>
<gene>
    <name type="ordered locus">TM_1410</name>
</gene>
<sequence length="323" mass="37719">MSHLKNILFIIIVSLFFISSCSTVMSTEGWFMPFDNWLYQLQNADPVEISSSGFEIAVIDYSKDGSESGEYSPEEIKIMVDAGVVPVAYVNIGQAEDYRFYWKESWYTNTPEWLGEEDPAWPGNYFVKYWYNEWKEIVFSYLDRVIDQGFKGIYLDRIDSFEYWAQEGVISRRSAARKMINFVLEIAEYVRERKPDMLIIPQNGENILDFDDGQLASTVSGWAVENLFYLKTIPLEENETKSRLEYLIRLNRKGKFILSVDYVDDGSDSFENISRILDYYEKAKRNGCIPYAARSDLELDEMNVIEGIQPPEALKDYESRTYR</sequence>
<protein>
    <recommendedName>
        <fullName>Uncharacterized protein TM_1410</fullName>
    </recommendedName>
</protein>
<accession>Q9X1D0</accession>
<evidence type="ECO:0007829" key="1">
    <source>
        <dbReference type="PDB" id="2AAM"/>
    </source>
</evidence>